<feature type="chain" id="PRO_1000055943" description="Large ribosomal subunit protein bL17">
    <location>
        <begin position="1"/>
        <end position="131"/>
    </location>
</feature>
<dbReference type="EMBL" id="CP000469">
    <property type="protein sequence ID" value="ABK46469.1"/>
    <property type="molecule type" value="Genomic_DNA"/>
</dbReference>
<dbReference type="RefSeq" id="WP_011621033.1">
    <property type="nucleotide sequence ID" value="NC_008577.1"/>
</dbReference>
<dbReference type="SMR" id="A0KRQ0"/>
<dbReference type="STRING" id="94122.Shewana3_0225"/>
<dbReference type="GeneID" id="94726212"/>
<dbReference type="KEGG" id="shn:Shewana3_0225"/>
<dbReference type="eggNOG" id="COG0203">
    <property type="taxonomic scope" value="Bacteria"/>
</dbReference>
<dbReference type="HOGENOM" id="CLU_074407_2_0_6"/>
<dbReference type="OrthoDB" id="9809073at2"/>
<dbReference type="Proteomes" id="UP000002589">
    <property type="component" value="Chromosome"/>
</dbReference>
<dbReference type="GO" id="GO:0022625">
    <property type="term" value="C:cytosolic large ribosomal subunit"/>
    <property type="evidence" value="ECO:0007669"/>
    <property type="project" value="TreeGrafter"/>
</dbReference>
<dbReference type="GO" id="GO:0003735">
    <property type="term" value="F:structural constituent of ribosome"/>
    <property type="evidence" value="ECO:0007669"/>
    <property type="project" value="InterPro"/>
</dbReference>
<dbReference type="GO" id="GO:0006412">
    <property type="term" value="P:translation"/>
    <property type="evidence" value="ECO:0007669"/>
    <property type="project" value="UniProtKB-UniRule"/>
</dbReference>
<dbReference type="FunFam" id="3.90.1030.10:FF:000001">
    <property type="entry name" value="50S ribosomal protein L17"/>
    <property type="match status" value="1"/>
</dbReference>
<dbReference type="Gene3D" id="3.90.1030.10">
    <property type="entry name" value="Ribosomal protein L17"/>
    <property type="match status" value="1"/>
</dbReference>
<dbReference type="HAMAP" id="MF_01368">
    <property type="entry name" value="Ribosomal_bL17"/>
    <property type="match status" value="1"/>
</dbReference>
<dbReference type="InterPro" id="IPR000456">
    <property type="entry name" value="Ribosomal_bL17"/>
</dbReference>
<dbReference type="InterPro" id="IPR047859">
    <property type="entry name" value="Ribosomal_bL17_CS"/>
</dbReference>
<dbReference type="InterPro" id="IPR036373">
    <property type="entry name" value="Ribosomal_bL17_sf"/>
</dbReference>
<dbReference type="NCBIfam" id="TIGR00059">
    <property type="entry name" value="L17"/>
    <property type="match status" value="1"/>
</dbReference>
<dbReference type="PANTHER" id="PTHR14413:SF16">
    <property type="entry name" value="LARGE RIBOSOMAL SUBUNIT PROTEIN BL17M"/>
    <property type="match status" value="1"/>
</dbReference>
<dbReference type="PANTHER" id="PTHR14413">
    <property type="entry name" value="RIBOSOMAL PROTEIN L17"/>
    <property type="match status" value="1"/>
</dbReference>
<dbReference type="Pfam" id="PF01196">
    <property type="entry name" value="Ribosomal_L17"/>
    <property type="match status" value="1"/>
</dbReference>
<dbReference type="SUPFAM" id="SSF64263">
    <property type="entry name" value="Prokaryotic ribosomal protein L17"/>
    <property type="match status" value="1"/>
</dbReference>
<dbReference type="PROSITE" id="PS01167">
    <property type="entry name" value="RIBOSOMAL_L17"/>
    <property type="match status" value="1"/>
</dbReference>
<protein>
    <recommendedName>
        <fullName evidence="1">Large ribosomal subunit protein bL17</fullName>
    </recommendedName>
    <alternativeName>
        <fullName evidence="2">50S ribosomal protein L17</fullName>
    </alternativeName>
</protein>
<name>RL17_SHESA</name>
<organism>
    <name type="scientific">Shewanella sp. (strain ANA-3)</name>
    <dbReference type="NCBI Taxonomy" id="94122"/>
    <lineage>
        <taxon>Bacteria</taxon>
        <taxon>Pseudomonadati</taxon>
        <taxon>Pseudomonadota</taxon>
        <taxon>Gammaproteobacteria</taxon>
        <taxon>Alteromonadales</taxon>
        <taxon>Shewanellaceae</taxon>
        <taxon>Shewanella</taxon>
    </lineage>
</organism>
<gene>
    <name evidence="1" type="primary">rplQ</name>
    <name type="ordered locus">Shewana3_0225</name>
</gene>
<keyword id="KW-0687">Ribonucleoprotein</keyword>
<keyword id="KW-0689">Ribosomal protein</keyword>
<reference key="1">
    <citation type="submission" date="2006-09" db="EMBL/GenBank/DDBJ databases">
        <title>Complete sequence of chromosome 1 of Shewanella sp. ANA-3.</title>
        <authorList>
            <person name="Copeland A."/>
            <person name="Lucas S."/>
            <person name="Lapidus A."/>
            <person name="Barry K."/>
            <person name="Detter J.C."/>
            <person name="Glavina del Rio T."/>
            <person name="Hammon N."/>
            <person name="Israni S."/>
            <person name="Dalin E."/>
            <person name="Tice H."/>
            <person name="Pitluck S."/>
            <person name="Chertkov O."/>
            <person name="Brettin T."/>
            <person name="Bruce D."/>
            <person name="Han C."/>
            <person name="Tapia R."/>
            <person name="Gilna P."/>
            <person name="Schmutz J."/>
            <person name="Larimer F."/>
            <person name="Land M."/>
            <person name="Hauser L."/>
            <person name="Kyrpides N."/>
            <person name="Kim E."/>
            <person name="Newman D."/>
            <person name="Salticov C."/>
            <person name="Konstantinidis K."/>
            <person name="Klappenback J."/>
            <person name="Tiedje J."/>
            <person name="Richardson P."/>
        </authorList>
    </citation>
    <scope>NUCLEOTIDE SEQUENCE [LARGE SCALE GENOMIC DNA]</scope>
    <source>
        <strain>ANA-3</strain>
    </source>
</reference>
<sequence>MRHRKSGRQLNRNSSHRQAMFRNMASSLVRHEIIKTTVAKAKELRRVVEPLITLAKSDSVANRRLAFARTRDAEVVGKLFTELGPRYQERPGGYTRILKCGLRAGDKAPMAYIELVGRPEAAQAVEVEAAE</sequence>
<accession>A0KRQ0</accession>
<comment type="subunit">
    <text evidence="1">Part of the 50S ribosomal subunit. Contacts protein L32.</text>
</comment>
<comment type="similarity">
    <text evidence="1">Belongs to the bacterial ribosomal protein bL17 family.</text>
</comment>
<proteinExistence type="inferred from homology"/>
<evidence type="ECO:0000255" key="1">
    <source>
        <dbReference type="HAMAP-Rule" id="MF_01368"/>
    </source>
</evidence>
<evidence type="ECO:0000305" key="2"/>